<organism>
    <name type="scientific">Lissodelphis borealis</name>
    <name type="common">Northern right whale dolphin</name>
    <name type="synonym">Delphinapterus borealis</name>
    <dbReference type="NCBI Taxonomy" id="103588"/>
    <lineage>
        <taxon>Eukaryota</taxon>
        <taxon>Metazoa</taxon>
        <taxon>Chordata</taxon>
        <taxon>Craniata</taxon>
        <taxon>Vertebrata</taxon>
        <taxon>Euteleostomi</taxon>
        <taxon>Mammalia</taxon>
        <taxon>Eutheria</taxon>
        <taxon>Laurasiatheria</taxon>
        <taxon>Artiodactyla</taxon>
        <taxon>Whippomorpha</taxon>
        <taxon>Cetacea</taxon>
        <taxon>Odontoceti</taxon>
        <taxon>Delphinidae</taxon>
        <taxon>Lissodelphis</taxon>
    </lineage>
</organism>
<name>CYB_LISBO</name>
<gene>
    <name type="primary">MT-CYB</name>
    <name type="synonym">COB</name>
    <name type="synonym">CYTB</name>
    <name type="synonym">MTCYB</name>
</gene>
<evidence type="ECO:0000250" key="1"/>
<evidence type="ECO:0000250" key="2">
    <source>
        <dbReference type="UniProtKB" id="P00157"/>
    </source>
</evidence>
<evidence type="ECO:0000255" key="3">
    <source>
        <dbReference type="PROSITE-ProRule" id="PRU00967"/>
    </source>
</evidence>
<evidence type="ECO:0000255" key="4">
    <source>
        <dbReference type="PROSITE-ProRule" id="PRU00968"/>
    </source>
</evidence>
<dbReference type="EMBL" id="AF084064">
    <property type="protein sequence ID" value="AAD54441.1"/>
    <property type="molecule type" value="Genomic_DNA"/>
</dbReference>
<dbReference type="SMR" id="Q9TDM1"/>
<dbReference type="GO" id="GO:0005743">
    <property type="term" value="C:mitochondrial inner membrane"/>
    <property type="evidence" value="ECO:0007669"/>
    <property type="project" value="UniProtKB-SubCell"/>
</dbReference>
<dbReference type="GO" id="GO:0045275">
    <property type="term" value="C:respiratory chain complex III"/>
    <property type="evidence" value="ECO:0007669"/>
    <property type="project" value="InterPro"/>
</dbReference>
<dbReference type="GO" id="GO:0046872">
    <property type="term" value="F:metal ion binding"/>
    <property type="evidence" value="ECO:0007669"/>
    <property type="project" value="UniProtKB-KW"/>
</dbReference>
<dbReference type="GO" id="GO:0008121">
    <property type="term" value="F:ubiquinol-cytochrome-c reductase activity"/>
    <property type="evidence" value="ECO:0007669"/>
    <property type="project" value="InterPro"/>
</dbReference>
<dbReference type="GO" id="GO:0006122">
    <property type="term" value="P:mitochondrial electron transport, ubiquinol to cytochrome c"/>
    <property type="evidence" value="ECO:0007669"/>
    <property type="project" value="TreeGrafter"/>
</dbReference>
<dbReference type="CDD" id="cd00290">
    <property type="entry name" value="cytochrome_b_C"/>
    <property type="match status" value="1"/>
</dbReference>
<dbReference type="CDD" id="cd00284">
    <property type="entry name" value="Cytochrome_b_N"/>
    <property type="match status" value="1"/>
</dbReference>
<dbReference type="FunFam" id="1.20.810.10:FF:000002">
    <property type="entry name" value="Cytochrome b"/>
    <property type="match status" value="1"/>
</dbReference>
<dbReference type="Gene3D" id="1.20.810.10">
    <property type="entry name" value="Cytochrome Bc1 Complex, Chain C"/>
    <property type="match status" value="1"/>
</dbReference>
<dbReference type="InterPro" id="IPR005798">
    <property type="entry name" value="Cyt_b/b6_C"/>
</dbReference>
<dbReference type="InterPro" id="IPR036150">
    <property type="entry name" value="Cyt_b/b6_C_sf"/>
</dbReference>
<dbReference type="InterPro" id="IPR005797">
    <property type="entry name" value="Cyt_b/b6_N"/>
</dbReference>
<dbReference type="InterPro" id="IPR027387">
    <property type="entry name" value="Cytb/b6-like_sf"/>
</dbReference>
<dbReference type="InterPro" id="IPR030689">
    <property type="entry name" value="Cytochrome_b"/>
</dbReference>
<dbReference type="InterPro" id="IPR048260">
    <property type="entry name" value="Cytochrome_b_C_euk/bac"/>
</dbReference>
<dbReference type="InterPro" id="IPR048259">
    <property type="entry name" value="Cytochrome_b_N_euk/bac"/>
</dbReference>
<dbReference type="InterPro" id="IPR016174">
    <property type="entry name" value="Di-haem_cyt_TM"/>
</dbReference>
<dbReference type="PANTHER" id="PTHR19271">
    <property type="entry name" value="CYTOCHROME B"/>
    <property type="match status" value="1"/>
</dbReference>
<dbReference type="PANTHER" id="PTHR19271:SF16">
    <property type="entry name" value="CYTOCHROME B"/>
    <property type="match status" value="1"/>
</dbReference>
<dbReference type="Pfam" id="PF00032">
    <property type="entry name" value="Cytochrom_B_C"/>
    <property type="match status" value="1"/>
</dbReference>
<dbReference type="Pfam" id="PF00033">
    <property type="entry name" value="Cytochrome_B"/>
    <property type="match status" value="1"/>
</dbReference>
<dbReference type="PIRSF" id="PIRSF038885">
    <property type="entry name" value="COB"/>
    <property type="match status" value="1"/>
</dbReference>
<dbReference type="SUPFAM" id="SSF81648">
    <property type="entry name" value="a domain/subunit of cytochrome bc1 complex (Ubiquinol-cytochrome c reductase)"/>
    <property type="match status" value="1"/>
</dbReference>
<dbReference type="SUPFAM" id="SSF81342">
    <property type="entry name" value="Transmembrane di-heme cytochromes"/>
    <property type="match status" value="1"/>
</dbReference>
<dbReference type="PROSITE" id="PS51003">
    <property type="entry name" value="CYTB_CTER"/>
    <property type="match status" value="1"/>
</dbReference>
<dbReference type="PROSITE" id="PS51002">
    <property type="entry name" value="CYTB_NTER"/>
    <property type="match status" value="1"/>
</dbReference>
<sequence>MTNIRKTHPLMKILNDAFIDLPTPSNISSWWNFGSLLGLCLIMQILTGLFLAMHYTPDTSTAFSSVAHICRDVNYGWFIRYLHANGASMFFICLYAHIGRGLYYGSYMFQETWNIGVLLLLTVMATAFVGYVLPWGQMSFWGATVITNLLSAIPYIGTTLVEWIWGGFSVDKATLTRFFAFHFILPFIITALAAVHLLFLHETGSNNPTGIPSNMDMIPFHPYYTIKDILGALFLILALLALTLFTPDLLGDPDNYTPANPLSTPAHIKPEWYFLFAYAILRSIPNKLGGVLALLLSILILIFIPMLQTSKQRSMMFRPFSQLLFWTLIADLLTLTWIGGQPVEHPYIIVGQLASILYFFLILVLMPTVSLIENKLLKW</sequence>
<protein>
    <recommendedName>
        <fullName>Cytochrome b</fullName>
    </recommendedName>
    <alternativeName>
        <fullName>Complex III subunit 3</fullName>
    </alternativeName>
    <alternativeName>
        <fullName>Complex III subunit III</fullName>
    </alternativeName>
    <alternativeName>
        <fullName>Cytochrome b-c1 complex subunit 3</fullName>
    </alternativeName>
    <alternativeName>
        <fullName>Ubiquinol-cytochrome-c reductase complex cytochrome b subunit</fullName>
    </alternativeName>
</protein>
<keyword id="KW-0249">Electron transport</keyword>
<keyword id="KW-0349">Heme</keyword>
<keyword id="KW-0408">Iron</keyword>
<keyword id="KW-0472">Membrane</keyword>
<keyword id="KW-0479">Metal-binding</keyword>
<keyword id="KW-0496">Mitochondrion</keyword>
<keyword id="KW-0999">Mitochondrion inner membrane</keyword>
<keyword id="KW-0679">Respiratory chain</keyword>
<keyword id="KW-0812">Transmembrane</keyword>
<keyword id="KW-1133">Transmembrane helix</keyword>
<keyword id="KW-0813">Transport</keyword>
<keyword id="KW-0830">Ubiquinone</keyword>
<reference key="1">
    <citation type="journal article" date="1999" name="Mar. Mamm. Sci.">
        <title>Phylogenetic relationships among the delphinid cetaceans based on full cytochrome b sequences.</title>
        <authorList>
            <person name="LeDuc R.G."/>
            <person name="Perrin W.F."/>
            <person name="Dizon A.E."/>
        </authorList>
    </citation>
    <scope>NUCLEOTIDE SEQUENCE [GENOMIC DNA]</scope>
</reference>
<accession>Q9TDM1</accession>
<comment type="function">
    <text evidence="2">Component of the ubiquinol-cytochrome c reductase complex (complex III or cytochrome b-c1 complex) that is part of the mitochondrial respiratory chain. The b-c1 complex mediates electron transfer from ubiquinol to cytochrome c. Contributes to the generation of a proton gradient across the mitochondrial membrane that is then used for ATP synthesis.</text>
</comment>
<comment type="cofactor">
    <cofactor evidence="2">
        <name>heme b</name>
        <dbReference type="ChEBI" id="CHEBI:60344"/>
    </cofactor>
    <text evidence="2">Binds 2 heme b groups non-covalently.</text>
</comment>
<comment type="subunit">
    <text evidence="2">The cytochrome bc1 complex contains 11 subunits: 3 respiratory subunits (MT-CYB, CYC1 and UQCRFS1), 2 core proteins (UQCRC1 and UQCRC2) and 6 low-molecular weight proteins (UQCRH/QCR6, UQCRB/QCR7, UQCRQ/QCR8, UQCR10/QCR9, UQCR11/QCR10 and a cleavage product of UQCRFS1). This cytochrome bc1 complex then forms a dimer.</text>
</comment>
<comment type="subcellular location">
    <subcellularLocation>
        <location evidence="2">Mitochondrion inner membrane</location>
        <topology evidence="2">Multi-pass membrane protein</topology>
    </subcellularLocation>
</comment>
<comment type="miscellaneous">
    <text evidence="1">Heme 1 (or BL or b562) is low-potential and absorbs at about 562 nm, and heme 2 (or BH or b566) is high-potential and absorbs at about 566 nm.</text>
</comment>
<comment type="similarity">
    <text evidence="3 4">Belongs to the cytochrome b family.</text>
</comment>
<comment type="caution">
    <text evidence="2">The full-length protein contains only eight transmembrane helices, not nine as predicted by bioinformatics tools.</text>
</comment>
<geneLocation type="mitochondrion"/>
<feature type="chain" id="PRO_0000061126" description="Cytochrome b">
    <location>
        <begin position="1"/>
        <end position="379"/>
    </location>
</feature>
<feature type="transmembrane region" description="Helical" evidence="2">
    <location>
        <begin position="33"/>
        <end position="53"/>
    </location>
</feature>
<feature type="transmembrane region" description="Helical" evidence="2">
    <location>
        <begin position="77"/>
        <end position="98"/>
    </location>
</feature>
<feature type="transmembrane region" description="Helical" evidence="2">
    <location>
        <begin position="113"/>
        <end position="133"/>
    </location>
</feature>
<feature type="transmembrane region" description="Helical" evidence="2">
    <location>
        <begin position="178"/>
        <end position="198"/>
    </location>
</feature>
<feature type="transmembrane region" description="Helical" evidence="2">
    <location>
        <begin position="226"/>
        <end position="246"/>
    </location>
</feature>
<feature type="transmembrane region" description="Helical" evidence="2">
    <location>
        <begin position="288"/>
        <end position="308"/>
    </location>
</feature>
<feature type="transmembrane region" description="Helical" evidence="2">
    <location>
        <begin position="320"/>
        <end position="340"/>
    </location>
</feature>
<feature type="transmembrane region" description="Helical" evidence="2">
    <location>
        <begin position="347"/>
        <end position="367"/>
    </location>
</feature>
<feature type="binding site" description="axial binding residue" evidence="2">
    <location>
        <position position="83"/>
    </location>
    <ligand>
        <name>heme b</name>
        <dbReference type="ChEBI" id="CHEBI:60344"/>
        <label>b562</label>
    </ligand>
    <ligandPart>
        <name>Fe</name>
        <dbReference type="ChEBI" id="CHEBI:18248"/>
    </ligandPart>
</feature>
<feature type="binding site" description="axial binding residue" evidence="2">
    <location>
        <position position="97"/>
    </location>
    <ligand>
        <name>heme b</name>
        <dbReference type="ChEBI" id="CHEBI:60344"/>
        <label>b566</label>
    </ligand>
    <ligandPart>
        <name>Fe</name>
        <dbReference type="ChEBI" id="CHEBI:18248"/>
    </ligandPart>
</feature>
<feature type="binding site" description="axial binding residue" evidence="2">
    <location>
        <position position="182"/>
    </location>
    <ligand>
        <name>heme b</name>
        <dbReference type="ChEBI" id="CHEBI:60344"/>
        <label>b562</label>
    </ligand>
    <ligandPart>
        <name>Fe</name>
        <dbReference type="ChEBI" id="CHEBI:18248"/>
    </ligandPart>
</feature>
<feature type="binding site" description="axial binding residue" evidence="2">
    <location>
        <position position="196"/>
    </location>
    <ligand>
        <name>heme b</name>
        <dbReference type="ChEBI" id="CHEBI:60344"/>
        <label>b566</label>
    </ligand>
    <ligandPart>
        <name>Fe</name>
        <dbReference type="ChEBI" id="CHEBI:18248"/>
    </ligandPart>
</feature>
<feature type="binding site" evidence="2">
    <location>
        <position position="201"/>
    </location>
    <ligand>
        <name>a ubiquinone</name>
        <dbReference type="ChEBI" id="CHEBI:16389"/>
    </ligand>
</feature>
<proteinExistence type="inferred from homology"/>